<dbReference type="EC" id="2.7.7.4" evidence="2"/>
<dbReference type="EMBL" id="CU928162">
    <property type="protein sequence ID" value="CAR09369.2"/>
    <property type="molecule type" value="Genomic_DNA"/>
</dbReference>
<dbReference type="RefSeq" id="WP_001090361.1">
    <property type="nucleotide sequence ID" value="NC_011745.1"/>
</dbReference>
<dbReference type="SMR" id="B7MZ52"/>
<dbReference type="GeneID" id="93779255"/>
<dbReference type="KEGG" id="ecq:ECED1_3207"/>
<dbReference type="HOGENOM" id="CLU_007265_5_2_6"/>
<dbReference type="UniPathway" id="UPA00140">
    <property type="reaction ID" value="UER00204"/>
</dbReference>
<dbReference type="Proteomes" id="UP000000748">
    <property type="component" value="Chromosome"/>
</dbReference>
<dbReference type="GO" id="GO:0005524">
    <property type="term" value="F:ATP binding"/>
    <property type="evidence" value="ECO:0007669"/>
    <property type="project" value="UniProtKB-KW"/>
</dbReference>
<dbReference type="GO" id="GO:0005525">
    <property type="term" value="F:GTP binding"/>
    <property type="evidence" value="ECO:0007669"/>
    <property type="project" value="UniProtKB-UniRule"/>
</dbReference>
<dbReference type="GO" id="GO:0003924">
    <property type="term" value="F:GTPase activity"/>
    <property type="evidence" value="ECO:0007669"/>
    <property type="project" value="InterPro"/>
</dbReference>
<dbReference type="GO" id="GO:0004781">
    <property type="term" value="F:sulfate adenylyltransferase (ATP) activity"/>
    <property type="evidence" value="ECO:0007669"/>
    <property type="project" value="UniProtKB-UniRule"/>
</dbReference>
<dbReference type="GO" id="GO:0070814">
    <property type="term" value="P:hydrogen sulfide biosynthetic process"/>
    <property type="evidence" value="ECO:0007669"/>
    <property type="project" value="UniProtKB-UniRule"/>
</dbReference>
<dbReference type="GO" id="GO:0000103">
    <property type="term" value="P:sulfate assimilation"/>
    <property type="evidence" value="ECO:0007669"/>
    <property type="project" value="UniProtKB-UniRule"/>
</dbReference>
<dbReference type="CDD" id="cd04166">
    <property type="entry name" value="CysN_ATPS"/>
    <property type="match status" value="1"/>
</dbReference>
<dbReference type="CDD" id="cd03695">
    <property type="entry name" value="CysN_NodQ_II"/>
    <property type="match status" value="1"/>
</dbReference>
<dbReference type="CDD" id="cd04095">
    <property type="entry name" value="CysN_NoDQ_III"/>
    <property type="match status" value="1"/>
</dbReference>
<dbReference type="FunFam" id="2.40.30.10:FF:000027">
    <property type="entry name" value="Sulfate adenylyltransferase subunit 1"/>
    <property type="match status" value="1"/>
</dbReference>
<dbReference type="FunFam" id="2.40.30.10:FF:000031">
    <property type="entry name" value="Sulfate adenylyltransferase subunit 1"/>
    <property type="match status" value="1"/>
</dbReference>
<dbReference type="FunFam" id="3.40.50.300:FF:000119">
    <property type="entry name" value="Sulfate adenylyltransferase subunit 1"/>
    <property type="match status" value="1"/>
</dbReference>
<dbReference type="Gene3D" id="3.40.50.300">
    <property type="entry name" value="P-loop containing nucleotide triphosphate hydrolases"/>
    <property type="match status" value="1"/>
</dbReference>
<dbReference type="Gene3D" id="2.40.30.10">
    <property type="entry name" value="Translation factors"/>
    <property type="match status" value="2"/>
</dbReference>
<dbReference type="HAMAP" id="MF_00062">
    <property type="entry name" value="Sulf_adenylyltr_sub1"/>
    <property type="match status" value="1"/>
</dbReference>
<dbReference type="InterPro" id="IPR041757">
    <property type="entry name" value="CysN_GTP-bd"/>
</dbReference>
<dbReference type="InterPro" id="IPR044138">
    <property type="entry name" value="CysN_II"/>
</dbReference>
<dbReference type="InterPro" id="IPR044139">
    <property type="entry name" value="CysN_NoDQ_III"/>
</dbReference>
<dbReference type="InterPro" id="IPR031157">
    <property type="entry name" value="G_TR_CS"/>
</dbReference>
<dbReference type="InterPro" id="IPR054696">
    <property type="entry name" value="GTP-eEF1A_C"/>
</dbReference>
<dbReference type="InterPro" id="IPR027417">
    <property type="entry name" value="P-loop_NTPase"/>
</dbReference>
<dbReference type="InterPro" id="IPR005225">
    <property type="entry name" value="Small_GTP-bd"/>
</dbReference>
<dbReference type="InterPro" id="IPR011779">
    <property type="entry name" value="SO4_adenylTrfase_lsu"/>
</dbReference>
<dbReference type="InterPro" id="IPR000795">
    <property type="entry name" value="T_Tr_GTP-bd_dom"/>
</dbReference>
<dbReference type="InterPro" id="IPR050100">
    <property type="entry name" value="TRAFAC_GTPase_members"/>
</dbReference>
<dbReference type="InterPro" id="IPR009000">
    <property type="entry name" value="Transl_B-barrel_sf"/>
</dbReference>
<dbReference type="InterPro" id="IPR009001">
    <property type="entry name" value="Transl_elong_EF1A/Init_IF2_C"/>
</dbReference>
<dbReference type="NCBIfam" id="TIGR02034">
    <property type="entry name" value="CysN"/>
    <property type="match status" value="1"/>
</dbReference>
<dbReference type="NCBIfam" id="NF003478">
    <property type="entry name" value="PRK05124.1"/>
    <property type="match status" value="1"/>
</dbReference>
<dbReference type="NCBIfam" id="TIGR00231">
    <property type="entry name" value="small_GTP"/>
    <property type="match status" value="1"/>
</dbReference>
<dbReference type="PANTHER" id="PTHR23115">
    <property type="entry name" value="TRANSLATION FACTOR"/>
    <property type="match status" value="1"/>
</dbReference>
<dbReference type="Pfam" id="PF22594">
    <property type="entry name" value="GTP-eEF1A_C"/>
    <property type="match status" value="1"/>
</dbReference>
<dbReference type="Pfam" id="PF00009">
    <property type="entry name" value="GTP_EFTU"/>
    <property type="match status" value="1"/>
</dbReference>
<dbReference type="PRINTS" id="PR00315">
    <property type="entry name" value="ELONGATNFCT"/>
</dbReference>
<dbReference type="SUPFAM" id="SSF50465">
    <property type="entry name" value="EF-Tu/eEF-1alpha/eIF2-gamma C-terminal domain"/>
    <property type="match status" value="1"/>
</dbReference>
<dbReference type="SUPFAM" id="SSF52540">
    <property type="entry name" value="P-loop containing nucleoside triphosphate hydrolases"/>
    <property type="match status" value="1"/>
</dbReference>
<dbReference type="SUPFAM" id="SSF50447">
    <property type="entry name" value="Translation proteins"/>
    <property type="match status" value="1"/>
</dbReference>
<dbReference type="PROSITE" id="PS00301">
    <property type="entry name" value="G_TR_1"/>
    <property type="match status" value="1"/>
</dbReference>
<dbReference type="PROSITE" id="PS51722">
    <property type="entry name" value="G_TR_2"/>
    <property type="match status" value="1"/>
</dbReference>
<reference key="1">
    <citation type="journal article" date="2009" name="PLoS Genet.">
        <title>Organised genome dynamics in the Escherichia coli species results in highly diverse adaptive paths.</title>
        <authorList>
            <person name="Touchon M."/>
            <person name="Hoede C."/>
            <person name="Tenaillon O."/>
            <person name="Barbe V."/>
            <person name="Baeriswyl S."/>
            <person name="Bidet P."/>
            <person name="Bingen E."/>
            <person name="Bonacorsi S."/>
            <person name="Bouchier C."/>
            <person name="Bouvet O."/>
            <person name="Calteau A."/>
            <person name="Chiapello H."/>
            <person name="Clermont O."/>
            <person name="Cruveiller S."/>
            <person name="Danchin A."/>
            <person name="Diard M."/>
            <person name="Dossat C."/>
            <person name="Karoui M.E."/>
            <person name="Frapy E."/>
            <person name="Garry L."/>
            <person name="Ghigo J.M."/>
            <person name="Gilles A.M."/>
            <person name="Johnson J."/>
            <person name="Le Bouguenec C."/>
            <person name="Lescat M."/>
            <person name="Mangenot S."/>
            <person name="Martinez-Jehanne V."/>
            <person name="Matic I."/>
            <person name="Nassif X."/>
            <person name="Oztas S."/>
            <person name="Petit M.A."/>
            <person name="Pichon C."/>
            <person name="Rouy Z."/>
            <person name="Ruf C.S."/>
            <person name="Schneider D."/>
            <person name="Tourret J."/>
            <person name="Vacherie B."/>
            <person name="Vallenet D."/>
            <person name="Medigue C."/>
            <person name="Rocha E.P.C."/>
            <person name="Denamur E."/>
        </authorList>
    </citation>
    <scope>NUCLEOTIDE SEQUENCE [LARGE SCALE GENOMIC DNA]</scope>
    <source>
        <strain>ED1a</strain>
    </source>
</reference>
<keyword id="KW-0067">ATP-binding</keyword>
<keyword id="KW-0342">GTP-binding</keyword>
<keyword id="KW-0547">Nucleotide-binding</keyword>
<keyword id="KW-0548">Nucleotidyltransferase</keyword>
<keyword id="KW-0808">Transferase</keyword>
<feature type="chain" id="PRO_1000117914" description="Sulfate adenylyltransferase subunit 1">
    <location>
        <begin position="1"/>
        <end position="475"/>
    </location>
</feature>
<feature type="domain" description="tr-type G">
    <location>
        <begin position="25"/>
        <end position="239"/>
    </location>
</feature>
<feature type="region of interest" description="G1" evidence="1">
    <location>
        <begin position="34"/>
        <end position="41"/>
    </location>
</feature>
<feature type="region of interest" description="G2" evidence="1">
    <location>
        <begin position="92"/>
        <end position="96"/>
    </location>
</feature>
<feature type="region of interest" description="G3" evidence="1">
    <location>
        <begin position="113"/>
        <end position="116"/>
    </location>
</feature>
<feature type="region of interest" description="G4" evidence="1">
    <location>
        <begin position="168"/>
        <end position="171"/>
    </location>
</feature>
<feature type="region of interest" description="G5" evidence="1">
    <location>
        <begin position="206"/>
        <end position="208"/>
    </location>
</feature>
<feature type="binding site" evidence="2">
    <location>
        <begin position="34"/>
        <end position="41"/>
    </location>
    <ligand>
        <name>GTP</name>
        <dbReference type="ChEBI" id="CHEBI:37565"/>
    </ligand>
</feature>
<feature type="binding site" evidence="2">
    <location>
        <begin position="113"/>
        <end position="117"/>
    </location>
    <ligand>
        <name>GTP</name>
        <dbReference type="ChEBI" id="CHEBI:37565"/>
    </ligand>
</feature>
<feature type="binding site" evidence="2">
    <location>
        <begin position="168"/>
        <end position="171"/>
    </location>
    <ligand>
        <name>GTP</name>
        <dbReference type="ChEBI" id="CHEBI:37565"/>
    </ligand>
</feature>
<proteinExistence type="inferred from homology"/>
<name>CYSN_ECO81</name>
<comment type="function">
    <text evidence="2">With CysD forms the ATP sulfurylase (ATPS) that catalyzes the adenylation of sulfate producing adenosine 5'-phosphosulfate (APS) and diphosphate, the first enzymatic step in sulfur assimilation pathway. APS synthesis involves the formation of a high-energy phosphoric-sulfuric acid anhydride bond driven by GTP hydrolysis by CysN coupled to ATP hydrolysis by CysD.</text>
</comment>
<comment type="catalytic activity">
    <reaction evidence="2">
        <text>sulfate + ATP + H(+) = adenosine 5'-phosphosulfate + diphosphate</text>
        <dbReference type="Rhea" id="RHEA:18133"/>
        <dbReference type="ChEBI" id="CHEBI:15378"/>
        <dbReference type="ChEBI" id="CHEBI:16189"/>
        <dbReference type="ChEBI" id="CHEBI:30616"/>
        <dbReference type="ChEBI" id="CHEBI:33019"/>
        <dbReference type="ChEBI" id="CHEBI:58243"/>
        <dbReference type="EC" id="2.7.7.4"/>
    </reaction>
</comment>
<comment type="pathway">
    <text evidence="2">Sulfur metabolism; hydrogen sulfide biosynthesis; sulfite from sulfate: step 1/3.</text>
</comment>
<comment type="subunit">
    <text evidence="2">Heterodimer composed of CysD, the smaller subunit, and CysN.</text>
</comment>
<comment type="similarity">
    <text evidence="2">Belongs to the TRAFAC class translation factor GTPase superfamily. Classic translation factor GTPase family. CysN/NodQ subfamily.</text>
</comment>
<gene>
    <name evidence="2" type="primary">cysN</name>
    <name type="ordered locus">ECED1_3207</name>
</gene>
<evidence type="ECO:0000250" key="1"/>
<evidence type="ECO:0000255" key="2">
    <source>
        <dbReference type="HAMAP-Rule" id="MF_00062"/>
    </source>
</evidence>
<organism>
    <name type="scientific">Escherichia coli O81 (strain ED1a)</name>
    <dbReference type="NCBI Taxonomy" id="585397"/>
    <lineage>
        <taxon>Bacteria</taxon>
        <taxon>Pseudomonadati</taxon>
        <taxon>Pseudomonadota</taxon>
        <taxon>Gammaproteobacteria</taxon>
        <taxon>Enterobacterales</taxon>
        <taxon>Enterobacteriaceae</taxon>
        <taxon>Escherichia</taxon>
    </lineage>
</organism>
<sequence length="475" mass="52558">MNTALAQQIANEGGVEAWMIAQQHKSLLRFLTCGSVDDGKSTLIGRLLHDTRQIYEDQLSSLHNDSKRHGTQGEKLDLALLVDGLQAEREQGITIDVAYRYFSTEKRKFIIADTPGHEQYTRNMATGASTCELAILLIDARKGVLDQTRRHSFISTLLGIKHLVVAINKMDLVDYSEETFTRIREDYLTFAGQLPGNLDIRFVPLSALEGDNVASQSESMPWYSGPTLLEVLETVEIQRVVDAQPMRFPVQYVNRPNLDFRGYAGTLASGRVEVGQRVKVLPSGVESNVARIVTFDGDREEAFAGEAITLVLTDEIDISRGDLLLAADEALPAVQSASVDVVWMAEQPLSPGQSYDIKIAGKKTRARVDGIRYQVDINNLTQREVENLPLNGIGLVDLTFDEPLVLDRYQQNPVTGGLIFIDRLSNVTVGAGMVHEPVSQATAAPSEFSAFELELNALVRRHFPHWGARDLLGDK</sequence>
<accession>B7MZ52</accession>
<protein>
    <recommendedName>
        <fullName evidence="2">Sulfate adenylyltransferase subunit 1</fullName>
        <ecNumber evidence="2">2.7.7.4</ecNumber>
    </recommendedName>
    <alternativeName>
        <fullName evidence="2">ATP-sulfurylase large subunit</fullName>
    </alternativeName>
    <alternativeName>
        <fullName evidence="2">Sulfate adenylate transferase</fullName>
        <shortName evidence="2">SAT</shortName>
    </alternativeName>
</protein>